<protein>
    <recommendedName>
        <fullName evidence="1">Putative pre-16S rRNA nuclease</fullName>
        <ecNumber evidence="1">3.1.-.-</ecNumber>
    </recommendedName>
</protein>
<sequence length="141" mass="15613">MPDGVGRELPRDGTVLAFDYGEKKIGVALGNFVTRHATALTILPNVSVEGRFQAVGELIREWTPVQLVVGMPVNPEGGEQPSMRLARRFGNQLNGRYSLPVEWVDERYSSRMAAMGGARRGELDAEAARIILQQYFDQLPL</sequence>
<proteinExistence type="inferred from homology"/>
<feature type="chain" id="PRO_0000257571" description="Putative pre-16S rRNA nuclease">
    <location>
        <begin position="1"/>
        <end position="141"/>
    </location>
</feature>
<name>YQGF_CUPPJ</name>
<comment type="function">
    <text evidence="1">Could be a nuclease involved in processing of the 5'-end of pre-16S rRNA.</text>
</comment>
<comment type="subcellular location">
    <subcellularLocation>
        <location evidence="1">Cytoplasm</location>
    </subcellularLocation>
</comment>
<comment type="similarity">
    <text evidence="1">Belongs to the YqgF nuclease family.</text>
</comment>
<evidence type="ECO:0000255" key="1">
    <source>
        <dbReference type="HAMAP-Rule" id="MF_00651"/>
    </source>
</evidence>
<keyword id="KW-0963">Cytoplasm</keyword>
<keyword id="KW-0378">Hydrolase</keyword>
<keyword id="KW-0540">Nuclease</keyword>
<keyword id="KW-0690">Ribosome biogenesis</keyword>
<accession>Q474U5</accession>
<gene>
    <name type="ordered locus">Reut_A0706</name>
</gene>
<dbReference type="EC" id="3.1.-.-" evidence="1"/>
<dbReference type="EMBL" id="CP000090">
    <property type="protein sequence ID" value="AAZ60088.1"/>
    <property type="molecule type" value="Genomic_DNA"/>
</dbReference>
<dbReference type="SMR" id="Q474U5"/>
<dbReference type="STRING" id="264198.Reut_A0706"/>
<dbReference type="KEGG" id="reu:Reut_A0706"/>
<dbReference type="eggNOG" id="COG0816">
    <property type="taxonomic scope" value="Bacteria"/>
</dbReference>
<dbReference type="HOGENOM" id="CLU_098240_3_2_4"/>
<dbReference type="OrthoDB" id="9796140at2"/>
<dbReference type="GO" id="GO:0005829">
    <property type="term" value="C:cytosol"/>
    <property type="evidence" value="ECO:0007669"/>
    <property type="project" value="TreeGrafter"/>
</dbReference>
<dbReference type="GO" id="GO:0004518">
    <property type="term" value="F:nuclease activity"/>
    <property type="evidence" value="ECO:0007669"/>
    <property type="project" value="UniProtKB-KW"/>
</dbReference>
<dbReference type="GO" id="GO:0000967">
    <property type="term" value="P:rRNA 5'-end processing"/>
    <property type="evidence" value="ECO:0007669"/>
    <property type="project" value="UniProtKB-UniRule"/>
</dbReference>
<dbReference type="CDD" id="cd16964">
    <property type="entry name" value="YqgF"/>
    <property type="match status" value="1"/>
</dbReference>
<dbReference type="Gene3D" id="3.30.420.140">
    <property type="entry name" value="YqgF/RNase H-like domain"/>
    <property type="match status" value="1"/>
</dbReference>
<dbReference type="HAMAP" id="MF_00651">
    <property type="entry name" value="Nuclease_YqgF"/>
    <property type="match status" value="1"/>
</dbReference>
<dbReference type="InterPro" id="IPR012337">
    <property type="entry name" value="RNaseH-like_sf"/>
</dbReference>
<dbReference type="InterPro" id="IPR005227">
    <property type="entry name" value="YqgF"/>
</dbReference>
<dbReference type="InterPro" id="IPR006641">
    <property type="entry name" value="YqgF/RNaseH-like_dom"/>
</dbReference>
<dbReference type="InterPro" id="IPR037027">
    <property type="entry name" value="YqgF/RNaseH-like_dom_sf"/>
</dbReference>
<dbReference type="NCBIfam" id="TIGR00250">
    <property type="entry name" value="RNAse_H_YqgF"/>
    <property type="match status" value="1"/>
</dbReference>
<dbReference type="PANTHER" id="PTHR33317">
    <property type="entry name" value="POLYNUCLEOTIDYL TRANSFERASE, RIBONUCLEASE H-LIKE SUPERFAMILY PROTEIN"/>
    <property type="match status" value="1"/>
</dbReference>
<dbReference type="PANTHER" id="PTHR33317:SF4">
    <property type="entry name" value="POLYNUCLEOTIDYL TRANSFERASE, RIBONUCLEASE H-LIKE SUPERFAMILY PROTEIN"/>
    <property type="match status" value="1"/>
</dbReference>
<dbReference type="Pfam" id="PF03652">
    <property type="entry name" value="RuvX"/>
    <property type="match status" value="1"/>
</dbReference>
<dbReference type="SMART" id="SM00732">
    <property type="entry name" value="YqgFc"/>
    <property type="match status" value="1"/>
</dbReference>
<dbReference type="SUPFAM" id="SSF53098">
    <property type="entry name" value="Ribonuclease H-like"/>
    <property type="match status" value="1"/>
</dbReference>
<organism>
    <name type="scientific">Cupriavidus pinatubonensis (strain JMP 134 / LMG 1197)</name>
    <name type="common">Cupriavidus necator (strain JMP 134)</name>
    <dbReference type="NCBI Taxonomy" id="264198"/>
    <lineage>
        <taxon>Bacteria</taxon>
        <taxon>Pseudomonadati</taxon>
        <taxon>Pseudomonadota</taxon>
        <taxon>Betaproteobacteria</taxon>
        <taxon>Burkholderiales</taxon>
        <taxon>Burkholderiaceae</taxon>
        <taxon>Cupriavidus</taxon>
    </lineage>
</organism>
<reference key="1">
    <citation type="journal article" date="2010" name="PLoS ONE">
        <title>The complete multipartite genome sequence of Cupriavidus necator JMP134, a versatile pollutant degrader.</title>
        <authorList>
            <person name="Lykidis A."/>
            <person name="Perez-Pantoja D."/>
            <person name="Ledger T."/>
            <person name="Mavromatis K."/>
            <person name="Anderson I.J."/>
            <person name="Ivanova N.N."/>
            <person name="Hooper S.D."/>
            <person name="Lapidus A."/>
            <person name="Lucas S."/>
            <person name="Gonzalez B."/>
            <person name="Kyrpides N.C."/>
        </authorList>
    </citation>
    <scope>NUCLEOTIDE SEQUENCE [LARGE SCALE GENOMIC DNA]</scope>
    <source>
        <strain>JMP134 / LMG 1197</strain>
    </source>
</reference>